<reference key="1">
    <citation type="journal article" date="2000" name="Science">
        <title>The genome sequence of Drosophila melanogaster.</title>
        <authorList>
            <person name="Adams M.D."/>
            <person name="Celniker S.E."/>
            <person name="Holt R.A."/>
            <person name="Evans C.A."/>
            <person name="Gocayne J.D."/>
            <person name="Amanatides P.G."/>
            <person name="Scherer S.E."/>
            <person name="Li P.W."/>
            <person name="Hoskins R.A."/>
            <person name="Galle R.F."/>
            <person name="George R.A."/>
            <person name="Lewis S.E."/>
            <person name="Richards S."/>
            <person name="Ashburner M."/>
            <person name="Henderson S.N."/>
            <person name="Sutton G.G."/>
            <person name="Wortman J.R."/>
            <person name="Yandell M.D."/>
            <person name="Zhang Q."/>
            <person name="Chen L.X."/>
            <person name="Brandon R.C."/>
            <person name="Rogers Y.-H.C."/>
            <person name="Blazej R.G."/>
            <person name="Champe M."/>
            <person name="Pfeiffer B.D."/>
            <person name="Wan K.H."/>
            <person name="Doyle C."/>
            <person name="Baxter E.G."/>
            <person name="Helt G."/>
            <person name="Nelson C.R."/>
            <person name="Miklos G.L.G."/>
            <person name="Abril J.F."/>
            <person name="Agbayani A."/>
            <person name="An H.-J."/>
            <person name="Andrews-Pfannkoch C."/>
            <person name="Baldwin D."/>
            <person name="Ballew R.M."/>
            <person name="Basu A."/>
            <person name="Baxendale J."/>
            <person name="Bayraktaroglu L."/>
            <person name="Beasley E.M."/>
            <person name="Beeson K.Y."/>
            <person name="Benos P.V."/>
            <person name="Berman B.P."/>
            <person name="Bhandari D."/>
            <person name="Bolshakov S."/>
            <person name="Borkova D."/>
            <person name="Botchan M.R."/>
            <person name="Bouck J."/>
            <person name="Brokstein P."/>
            <person name="Brottier P."/>
            <person name="Burtis K.C."/>
            <person name="Busam D.A."/>
            <person name="Butler H."/>
            <person name="Cadieu E."/>
            <person name="Center A."/>
            <person name="Chandra I."/>
            <person name="Cherry J.M."/>
            <person name="Cawley S."/>
            <person name="Dahlke C."/>
            <person name="Davenport L.B."/>
            <person name="Davies P."/>
            <person name="de Pablos B."/>
            <person name="Delcher A."/>
            <person name="Deng Z."/>
            <person name="Mays A.D."/>
            <person name="Dew I."/>
            <person name="Dietz S.M."/>
            <person name="Dodson K."/>
            <person name="Doup L.E."/>
            <person name="Downes M."/>
            <person name="Dugan-Rocha S."/>
            <person name="Dunkov B.C."/>
            <person name="Dunn P."/>
            <person name="Durbin K.J."/>
            <person name="Evangelista C.C."/>
            <person name="Ferraz C."/>
            <person name="Ferriera S."/>
            <person name="Fleischmann W."/>
            <person name="Fosler C."/>
            <person name="Gabrielian A.E."/>
            <person name="Garg N.S."/>
            <person name="Gelbart W.M."/>
            <person name="Glasser K."/>
            <person name="Glodek A."/>
            <person name="Gong F."/>
            <person name="Gorrell J.H."/>
            <person name="Gu Z."/>
            <person name="Guan P."/>
            <person name="Harris M."/>
            <person name="Harris N.L."/>
            <person name="Harvey D.A."/>
            <person name="Heiman T.J."/>
            <person name="Hernandez J.R."/>
            <person name="Houck J."/>
            <person name="Hostin D."/>
            <person name="Houston K.A."/>
            <person name="Howland T.J."/>
            <person name="Wei M.-H."/>
            <person name="Ibegwam C."/>
            <person name="Jalali M."/>
            <person name="Kalush F."/>
            <person name="Karpen G.H."/>
            <person name="Ke Z."/>
            <person name="Kennison J.A."/>
            <person name="Ketchum K.A."/>
            <person name="Kimmel B.E."/>
            <person name="Kodira C.D."/>
            <person name="Kraft C.L."/>
            <person name="Kravitz S."/>
            <person name="Kulp D."/>
            <person name="Lai Z."/>
            <person name="Lasko P."/>
            <person name="Lei Y."/>
            <person name="Levitsky A.A."/>
            <person name="Li J.H."/>
            <person name="Li Z."/>
            <person name="Liang Y."/>
            <person name="Lin X."/>
            <person name="Liu X."/>
            <person name="Mattei B."/>
            <person name="McIntosh T.C."/>
            <person name="McLeod M.P."/>
            <person name="McPherson D."/>
            <person name="Merkulov G."/>
            <person name="Milshina N.V."/>
            <person name="Mobarry C."/>
            <person name="Morris J."/>
            <person name="Moshrefi A."/>
            <person name="Mount S.M."/>
            <person name="Moy M."/>
            <person name="Murphy B."/>
            <person name="Murphy L."/>
            <person name="Muzny D.M."/>
            <person name="Nelson D.L."/>
            <person name="Nelson D.R."/>
            <person name="Nelson K.A."/>
            <person name="Nixon K."/>
            <person name="Nusskern D.R."/>
            <person name="Pacleb J.M."/>
            <person name="Palazzolo M."/>
            <person name="Pittman G.S."/>
            <person name="Pan S."/>
            <person name="Pollard J."/>
            <person name="Puri V."/>
            <person name="Reese M.G."/>
            <person name="Reinert K."/>
            <person name="Remington K."/>
            <person name="Saunders R.D.C."/>
            <person name="Scheeler F."/>
            <person name="Shen H."/>
            <person name="Shue B.C."/>
            <person name="Siden-Kiamos I."/>
            <person name="Simpson M."/>
            <person name="Skupski M.P."/>
            <person name="Smith T.J."/>
            <person name="Spier E."/>
            <person name="Spradling A.C."/>
            <person name="Stapleton M."/>
            <person name="Strong R."/>
            <person name="Sun E."/>
            <person name="Svirskas R."/>
            <person name="Tector C."/>
            <person name="Turner R."/>
            <person name="Venter E."/>
            <person name="Wang A.H."/>
            <person name="Wang X."/>
            <person name="Wang Z.-Y."/>
            <person name="Wassarman D.A."/>
            <person name="Weinstock G.M."/>
            <person name="Weissenbach J."/>
            <person name="Williams S.M."/>
            <person name="Woodage T."/>
            <person name="Worley K.C."/>
            <person name="Wu D."/>
            <person name="Yang S."/>
            <person name="Yao Q.A."/>
            <person name="Ye J."/>
            <person name="Yeh R.-F."/>
            <person name="Zaveri J.S."/>
            <person name="Zhan M."/>
            <person name="Zhang G."/>
            <person name="Zhao Q."/>
            <person name="Zheng L."/>
            <person name="Zheng X.H."/>
            <person name="Zhong F.N."/>
            <person name="Zhong W."/>
            <person name="Zhou X."/>
            <person name="Zhu S.C."/>
            <person name="Zhu X."/>
            <person name="Smith H.O."/>
            <person name="Gibbs R.A."/>
            <person name="Myers E.W."/>
            <person name="Rubin G.M."/>
            <person name="Venter J.C."/>
        </authorList>
    </citation>
    <scope>NUCLEOTIDE SEQUENCE [LARGE SCALE GENOMIC DNA]</scope>
    <source>
        <strain>Berkeley</strain>
    </source>
</reference>
<reference key="2">
    <citation type="journal article" date="2002" name="Genome Biol.">
        <title>Annotation of the Drosophila melanogaster euchromatic genome: a systematic review.</title>
        <authorList>
            <person name="Misra S."/>
            <person name="Crosby M.A."/>
            <person name="Mungall C.J."/>
            <person name="Matthews B.B."/>
            <person name="Campbell K.S."/>
            <person name="Hradecky P."/>
            <person name="Huang Y."/>
            <person name="Kaminker J.S."/>
            <person name="Millburn G.H."/>
            <person name="Prochnik S.E."/>
            <person name="Smith C.D."/>
            <person name="Tupy J.L."/>
            <person name="Whitfield E.J."/>
            <person name="Bayraktaroglu L."/>
            <person name="Berman B.P."/>
            <person name="Bettencourt B.R."/>
            <person name="Celniker S.E."/>
            <person name="de Grey A.D.N.J."/>
            <person name="Drysdale R.A."/>
            <person name="Harris N.L."/>
            <person name="Richter J."/>
            <person name="Russo S."/>
            <person name="Schroeder A.J."/>
            <person name="Shu S.Q."/>
            <person name="Stapleton M."/>
            <person name="Yamada C."/>
            <person name="Ashburner M."/>
            <person name="Gelbart W.M."/>
            <person name="Rubin G.M."/>
            <person name="Lewis S.E."/>
        </authorList>
    </citation>
    <scope>GENOME REANNOTATION</scope>
    <source>
        <strain>Berkeley</strain>
    </source>
</reference>
<reference key="3">
    <citation type="journal article" date="2000" name="Cell">
        <title>An olfactory sensory map in the fly brain.</title>
        <authorList>
            <person name="Vosshall L.B."/>
            <person name="Wong A.M."/>
            <person name="Axel R."/>
        </authorList>
    </citation>
    <scope>TISSUE SPECIFICITY</scope>
</reference>
<reference key="4">
    <citation type="journal article" date="2003" name="Proc. Natl. Acad. Sci. U.S.A.">
        <title>Molecular evolution of the insect chemoreceptor gene superfamily in Drosophila melanogaster.</title>
        <authorList>
            <person name="Robertson H.M."/>
            <person name="Warr C.G."/>
            <person name="Carlson J.R."/>
        </authorList>
    </citation>
    <scope>IDENTIFICATION OF ALTERNATIVE SPLICING</scope>
</reference>
<accession>Q9VU27</accession>
<feature type="chain" id="PRO_0000174266" description="Putative odorant receptor 69a, isoform A">
    <location>
        <begin position="1"/>
        <end position="393"/>
    </location>
</feature>
<feature type="topological domain" description="Cytoplasmic" evidence="2">
    <location>
        <begin position="1"/>
        <end position="39"/>
    </location>
</feature>
<feature type="transmembrane region" description="Helical; Name=1" evidence="2">
    <location>
        <begin position="40"/>
        <end position="60"/>
    </location>
</feature>
<feature type="topological domain" description="Extracellular" evidence="2">
    <location>
        <begin position="61"/>
        <end position="76"/>
    </location>
</feature>
<feature type="transmembrane region" description="Helical; Name=2" evidence="2">
    <location>
        <begin position="77"/>
        <end position="97"/>
    </location>
</feature>
<feature type="topological domain" description="Cytoplasmic" evidence="2">
    <location>
        <begin position="98"/>
        <end position="139"/>
    </location>
</feature>
<feature type="transmembrane region" description="Helical; Name=3" evidence="2">
    <location>
        <begin position="140"/>
        <end position="160"/>
    </location>
</feature>
<feature type="topological domain" description="Extracellular" evidence="2">
    <location>
        <begin position="161"/>
        <end position="189"/>
    </location>
</feature>
<feature type="transmembrane region" description="Helical; Name=4" evidence="2">
    <location>
        <begin position="190"/>
        <end position="210"/>
    </location>
</feature>
<feature type="topological domain" description="Cytoplasmic" evidence="2">
    <location>
        <begin position="211"/>
        <end position="269"/>
    </location>
</feature>
<feature type="transmembrane region" description="Helical; Name=5" evidence="2">
    <location>
        <begin position="270"/>
        <end position="290"/>
    </location>
</feature>
<feature type="topological domain" description="Extracellular" evidence="2">
    <location>
        <begin position="291"/>
        <end position="304"/>
    </location>
</feature>
<feature type="transmembrane region" description="Helical; Name=6" evidence="2">
    <location>
        <begin position="305"/>
        <end position="325"/>
    </location>
</feature>
<feature type="topological domain" description="Cytoplasmic" evidence="2">
    <location>
        <begin position="326"/>
        <end position="365"/>
    </location>
</feature>
<feature type="transmembrane region" description="Helical; Name=7" evidence="2">
    <location>
        <begin position="366"/>
        <end position="386"/>
    </location>
</feature>
<feature type="topological domain" description="Extracellular" evidence="2">
    <location>
        <begin position="387"/>
        <end position="393"/>
    </location>
</feature>
<gene>
    <name type="primary">Or69a</name>
    <name type="synonym">Or69b</name>
    <name type="ORF">CG32116</name>
</gene>
<evidence type="ECO:0000250" key="1"/>
<evidence type="ECO:0000255" key="2"/>
<evidence type="ECO:0000269" key="3">
    <source>
    </source>
</evidence>
<evidence type="ECO:0000305" key="4"/>
<sequence>MQLHDHMKYIDLGCKMACIPRYQWKGRPTERQFYASEQRIVFLLGTICQIFQITGVLIYWYCNGRLATETGTFVAQLSEMCSSFCLTFVGFCNVYAISTNRNQIETLLEELHQIYPRYRKNHYRCQHYFDMAMTIMRIEFLFYMILYVYYNSAPLWVLLWEHLHEEYDLSFKTQTNTWFPWKVHGSALGFGMAVLSITVGSFVGVGFSIVTQNLICLLTFQLKLHYDGISSQLVSLDCRRPGAHKELSILIAHHSRILQLGDQVNDIMNFVFGSSLVGATIAICMSSVSIMLLDLASAFKYASGLVAFVLYNFVICYMGTEVTLASGKVLPAAFYNNWYEGDLVYRRMLLILMMRATKPYMWKTYKLAPVSITTYMATLKFSYQMFTCVRSLK</sequence>
<dbReference type="EMBL" id="AE014296">
    <property type="protein sequence ID" value="AAF49864.3"/>
    <property type="molecule type" value="Genomic_DNA"/>
</dbReference>
<dbReference type="RefSeq" id="NP_996070.1">
    <molecule id="Q9VU27-1"/>
    <property type="nucleotide sequence ID" value="NM_206348.1"/>
</dbReference>
<dbReference type="SMR" id="Q9VU27"/>
<dbReference type="BioGRID" id="77813">
    <property type="interactions" value="1"/>
</dbReference>
<dbReference type="IntAct" id="Q9VU27">
    <property type="interactions" value="1"/>
</dbReference>
<dbReference type="STRING" id="7227.FBpp0089412"/>
<dbReference type="PaxDb" id="7227-FBpp0089412"/>
<dbReference type="EnsemblMetazoa" id="FBtr0075901">
    <molecule id="Q9VU27-1"/>
    <property type="protein sequence ID" value="FBpp0089412"/>
    <property type="gene ID" value="FBgn0041622"/>
</dbReference>
<dbReference type="GeneID" id="2768964"/>
<dbReference type="AGR" id="FB:FBgn0041622"/>
<dbReference type="CTD" id="2768964"/>
<dbReference type="FlyBase" id="FBgn0041622">
    <property type="gene designation" value="Or69a"/>
</dbReference>
<dbReference type="VEuPathDB" id="VectorBase:FBgn0041622"/>
<dbReference type="eggNOG" id="ENOG502TBU7">
    <property type="taxonomic scope" value="Eukaryota"/>
</dbReference>
<dbReference type="GeneTree" id="ENSGT00560000077544"/>
<dbReference type="HOGENOM" id="CLU_704520_0_0_1"/>
<dbReference type="OMA" id="LRAYKFT"/>
<dbReference type="OrthoDB" id="6617147at2759"/>
<dbReference type="PhylomeDB" id="Q9VU27"/>
<dbReference type="SignaLink" id="Q9VU27"/>
<dbReference type="BioGRID-ORCS" id="2768964">
    <property type="hits" value="0 hits in 1 CRISPR screen"/>
</dbReference>
<dbReference type="GenomeRNAi" id="2768964"/>
<dbReference type="Proteomes" id="UP000000803">
    <property type="component" value="Chromosome 3L"/>
</dbReference>
<dbReference type="Bgee" id="FBgn0041622">
    <property type="expression patterns" value="Expressed in adult olfactory receptor neuron Or69a (Drosophila)"/>
</dbReference>
<dbReference type="ExpressionAtlas" id="Q9VU27">
    <property type="expression patterns" value="baseline and differential"/>
</dbReference>
<dbReference type="GO" id="GO:0032590">
    <property type="term" value="C:dendrite membrane"/>
    <property type="evidence" value="ECO:0000250"/>
    <property type="project" value="FlyBase"/>
</dbReference>
<dbReference type="GO" id="GO:0005886">
    <property type="term" value="C:plasma membrane"/>
    <property type="evidence" value="ECO:0000318"/>
    <property type="project" value="GO_Central"/>
</dbReference>
<dbReference type="GO" id="GO:0005549">
    <property type="term" value="F:odorant binding"/>
    <property type="evidence" value="ECO:0000250"/>
    <property type="project" value="FlyBase"/>
</dbReference>
<dbReference type="GO" id="GO:0004984">
    <property type="term" value="F:olfactory receptor activity"/>
    <property type="evidence" value="ECO:0000318"/>
    <property type="project" value="GO_Central"/>
</dbReference>
<dbReference type="GO" id="GO:0050911">
    <property type="term" value="P:detection of chemical stimulus involved in sensory perception of smell"/>
    <property type="evidence" value="ECO:0000318"/>
    <property type="project" value="GO_Central"/>
</dbReference>
<dbReference type="GO" id="GO:0007165">
    <property type="term" value="P:signal transduction"/>
    <property type="evidence" value="ECO:0007669"/>
    <property type="project" value="UniProtKB-KW"/>
</dbReference>
<dbReference type="InterPro" id="IPR004117">
    <property type="entry name" value="7tm6_olfct_rcpt"/>
</dbReference>
<dbReference type="PANTHER" id="PTHR21137">
    <property type="entry name" value="ODORANT RECEPTOR"/>
    <property type="match status" value="1"/>
</dbReference>
<dbReference type="PANTHER" id="PTHR21137:SF44">
    <property type="entry name" value="ODORANT RECEPTOR 13A-RELATED"/>
    <property type="match status" value="1"/>
</dbReference>
<dbReference type="Pfam" id="PF02949">
    <property type="entry name" value="7tm_6"/>
    <property type="match status" value="1"/>
</dbReference>
<comment type="function">
    <text evidence="1">Odorant receptor which mediates acceptance or avoidance behavior, depending on its substrates. The odorant receptor repertoire encodes a large collection of odor stimuli that vary widely in identity, intensity, and duration. May form a complex with Orco to form odorant-sensing units, providing sensitive and prolonged odorant signaling and calcium permeability (By similarity).</text>
</comment>
<comment type="subunit">
    <text evidence="1">Interacts with Orco. Complexes exist early in the endomembrane system in olfactory sensory neurons (OSNs), coupling these complexes to the conserved ciliary trafficking pathway (By similarity).</text>
</comment>
<comment type="subcellular location">
    <subcellularLocation>
        <location evidence="1">Cell membrane</location>
        <topology evidence="1">Multi-pass membrane protein</topology>
    </subcellularLocation>
</comment>
<comment type="alternative products">
    <event type="alternative splicing"/>
    <isoform>
        <id>Q9VU27-1</id>
        <name>A</name>
        <sequence type="displayed"/>
    </isoform>
    <isoform>
        <id>P82985-1</id>
        <name>B</name>
        <sequence type="external"/>
    </isoform>
</comment>
<comment type="tissue specificity">
    <text evidence="3">Expressed in olfactory sensory neurons in the antenna.</text>
</comment>
<comment type="miscellaneous">
    <text>The atypical heteromeric and topological design of the odorant receptors appears to be an insect-specific solution for odor recognition, making the OR/Orco complex an attractive target for the development of highly selective insect repellents to disrupt olfactory-mediated host-seeking behaviors of insect disease vectors. Odor-evoked OR currents are independent of known G-protein-coupled second messenger pathways.</text>
</comment>
<comment type="similarity">
    <text evidence="4">Belongs to the insect chemoreceptor superfamily. Heteromeric odorant receptor channel (TC 1.A.69) family. Or49a subfamily.</text>
</comment>
<organism>
    <name type="scientific">Drosophila melanogaster</name>
    <name type="common">Fruit fly</name>
    <dbReference type="NCBI Taxonomy" id="7227"/>
    <lineage>
        <taxon>Eukaryota</taxon>
        <taxon>Metazoa</taxon>
        <taxon>Ecdysozoa</taxon>
        <taxon>Arthropoda</taxon>
        <taxon>Hexapoda</taxon>
        <taxon>Insecta</taxon>
        <taxon>Pterygota</taxon>
        <taxon>Neoptera</taxon>
        <taxon>Endopterygota</taxon>
        <taxon>Diptera</taxon>
        <taxon>Brachycera</taxon>
        <taxon>Muscomorpha</taxon>
        <taxon>Ephydroidea</taxon>
        <taxon>Drosophilidae</taxon>
        <taxon>Drosophila</taxon>
        <taxon>Sophophora</taxon>
    </lineage>
</organism>
<name>OR69A_DROME</name>
<proteinExistence type="evidence at transcript level"/>
<keyword id="KW-0025">Alternative splicing</keyword>
<keyword id="KW-1003">Cell membrane</keyword>
<keyword id="KW-0472">Membrane</keyword>
<keyword id="KW-0552">Olfaction</keyword>
<keyword id="KW-0675">Receptor</keyword>
<keyword id="KW-1185">Reference proteome</keyword>
<keyword id="KW-0716">Sensory transduction</keyword>
<keyword id="KW-0807">Transducer</keyword>
<keyword id="KW-0812">Transmembrane</keyword>
<keyword id="KW-1133">Transmembrane helix</keyword>
<protein>
    <recommendedName>
        <fullName>Putative odorant receptor 69a, isoform A</fullName>
    </recommendedName>
</protein>